<keyword id="KW-0002">3D-structure</keyword>
<keyword id="KW-0025">Alternative splicing</keyword>
<keyword id="KW-1003">Cell membrane</keyword>
<keyword id="KW-0217">Developmental protein</keyword>
<keyword id="KW-0221">Differentiation</keyword>
<keyword id="KW-1015">Disulfide bond</keyword>
<keyword id="KW-0325">Glycoprotein</keyword>
<keyword id="KW-0472">Membrane</keyword>
<keyword id="KW-0524">Neurogenesis</keyword>
<keyword id="KW-0597">Phosphoprotein</keyword>
<keyword id="KW-1267">Proteomics identification</keyword>
<keyword id="KW-1185">Reference proteome</keyword>
<keyword id="KW-0732">Signal</keyword>
<keyword id="KW-0812">Transmembrane</keyword>
<keyword id="KW-1133">Transmembrane helix</keyword>
<protein>
    <recommendedName>
        <fullName>Semaphorin-6A</fullName>
    </recommendedName>
    <alternativeName>
        <fullName>Semaphorin VIA</fullName>
        <shortName>Sema VIA</shortName>
    </alternativeName>
    <alternativeName>
        <fullName>Semaphorin-6A-1</fullName>
        <shortName>SEMA6A-1</shortName>
    </alternativeName>
</protein>
<evidence type="ECO:0000250" key="1">
    <source>
        <dbReference type="UniProtKB" id="O35464"/>
    </source>
</evidence>
<evidence type="ECO:0000255" key="2"/>
<evidence type="ECO:0000255" key="3">
    <source>
        <dbReference type="PROSITE-ProRule" id="PRU00352"/>
    </source>
</evidence>
<evidence type="ECO:0000256" key="4">
    <source>
        <dbReference type="SAM" id="MobiDB-lite"/>
    </source>
</evidence>
<evidence type="ECO:0000269" key="5">
    <source>
    </source>
</evidence>
<evidence type="ECO:0000269" key="6">
    <source>
    </source>
</evidence>
<evidence type="ECO:0000269" key="7">
    <source>
    </source>
</evidence>
<evidence type="ECO:0000305" key="8"/>
<evidence type="ECO:0007744" key="9">
    <source>
        <dbReference type="PDB" id="6WTS"/>
    </source>
</evidence>
<evidence type="ECO:0007744" key="10">
    <source>
    </source>
</evidence>
<evidence type="ECO:0007829" key="11">
    <source>
        <dbReference type="PDB" id="6WTS"/>
    </source>
</evidence>
<feature type="signal peptide" evidence="2">
    <location>
        <begin position="1"/>
        <end position="18"/>
    </location>
</feature>
<feature type="chain" id="PRO_0000032339" description="Semaphorin-6A">
    <location>
        <begin position="19"/>
        <end position="1030"/>
    </location>
</feature>
<feature type="topological domain" description="Extracellular" evidence="2">
    <location>
        <begin position="19"/>
        <end position="649"/>
    </location>
</feature>
<feature type="transmembrane region" description="Helical" evidence="2">
    <location>
        <begin position="650"/>
        <end position="670"/>
    </location>
</feature>
<feature type="topological domain" description="Cytoplasmic" evidence="2">
    <location>
        <begin position="671"/>
        <end position="1030"/>
    </location>
</feature>
<feature type="domain" description="Sema" evidence="3">
    <location>
        <begin position="24"/>
        <end position="512"/>
    </location>
</feature>
<feature type="region of interest" description="Disordered" evidence="4">
    <location>
        <begin position="754"/>
        <end position="778"/>
    </location>
</feature>
<feature type="region of interest" description="Disordered" evidence="4">
    <location>
        <begin position="860"/>
        <end position="897"/>
    </location>
</feature>
<feature type="region of interest" description="Disordered" evidence="4">
    <location>
        <begin position="912"/>
        <end position="1030"/>
    </location>
</feature>
<feature type="compositionally biased region" description="Polar residues" evidence="4">
    <location>
        <begin position="920"/>
        <end position="936"/>
    </location>
</feature>
<feature type="compositionally biased region" description="Low complexity" evidence="4">
    <location>
        <begin position="937"/>
        <end position="952"/>
    </location>
</feature>
<feature type="compositionally biased region" description="Polar residues" evidence="4">
    <location>
        <begin position="970"/>
        <end position="997"/>
    </location>
</feature>
<feature type="compositionally biased region" description="Polar residues" evidence="4">
    <location>
        <begin position="1018"/>
        <end position="1030"/>
    </location>
</feature>
<feature type="modified residue" description="Phosphoserine" evidence="10">
    <location>
        <position position="698"/>
    </location>
</feature>
<feature type="modified residue" description="Phosphoserine" evidence="10">
    <location>
        <position position="952"/>
    </location>
</feature>
<feature type="glycosylation site" description="N-linked (GlcNAc...) asparagine" evidence="7 9">
    <location>
        <position position="33"/>
    </location>
</feature>
<feature type="glycosylation site" description="N-linked (GlcNAc...) asparagine" evidence="2">
    <location>
        <position position="49"/>
    </location>
</feature>
<feature type="glycosylation site" description="N-linked (GlcNAc...) asparagine" evidence="7 9">
    <location>
        <position position="65"/>
    </location>
</feature>
<feature type="glycosylation site" description="N-linked (GlcNAc...) asparagine" evidence="2">
    <location>
        <position position="282"/>
    </location>
</feature>
<feature type="glycosylation site" description="N-linked (GlcNAc...) asparagine" evidence="7 9">
    <location>
        <position position="434"/>
    </location>
</feature>
<feature type="glycosylation site" description="N-linked (GlcNAc...) asparagine" evidence="2">
    <location>
        <position position="461"/>
    </location>
</feature>
<feature type="disulfide bond" evidence="3 7 9">
    <location>
        <begin position="107"/>
        <end position="117"/>
    </location>
</feature>
<feature type="disulfide bond" evidence="3 7 9">
    <location>
        <begin position="135"/>
        <end position="144"/>
    </location>
</feature>
<feature type="disulfide bond" evidence="3 7 9">
    <location>
        <begin position="258"/>
        <end position="369"/>
    </location>
</feature>
<feature type="disulfide bond" evidence="3 7 9">
    <location>
        <begin position="283"/>
        <end position="328"/>
    </location>
</feature>
<feature type="disulfide bond" evidence="3 7 9">
    <location>
        <begin position="477"/>
        <end position="506"/>
    </location>
</feature>
<feature type="disulfide bond" evidence="3 7 9">
    <location>
        <begin position="515"/>
        <end position="533"/>
    </location>
</feature>
<feature type="disulfide bond" evidence="3">
    <location>
        <begin position="521"/>
        <end position="568"/>
    </location>
</feature>
<feature type="disulfide bond" evidence="3 7 9">
    <location>
        <begin position="525"/>
        <end position="542"/>
    </location>
</feature>
<feature type="splice variant" id="VSP_007113" description="In isoform 2." evidence="8">
    <original>N</original>
    <variation>NDISTPLPDNEMSYNTVY</variation>
    <location>
        <position position="576"/>
    </location>
</feature>
<feature type="sequence variant" id="VAR_030296" description="In dbSNP:rs34966.">
    <original>H</original>
    <variation>Y</variation>
    <location>
        <position position="518"/>
    </location>
</feature>
<feature type="sequence variant" id="VAR_030297" description="In dbSNP:rs17432496.">
    <original>R</original>
    <variation>H</variation>
    <location>
        <position position="559"/>
    </location>
</feature>
<feature type="sequence variant" id="VAR_030298" description="In dbSNP:rs12516652.">
    <original>D</original>
    <variation>E</variation>
    <location>
        <position position="567"/>
    </location>
</feature>
<feature type="strand" evidence="11">
    <location>
        <begin position="27"/>
        <end position="30"/>
    </location>
</feature>
<feature type="helix" evidence="11">
    <location>
        <begin position="32"/>
        <end position="35"/>
    </location>
</feature>
<feature type="strand" evidence="11">
    <location>
        <begin position="60"/>
        <end position="64"/>
    </location>
</feature>
<feature type="strand" evidence="11">
    <location>
        <begin position="67"/>
        <end position="73"/>
    </location>
</feature>
<feature type="strand" evidence="11">
    <location>
        <begin position="75"/>
        <end position="80"/>
    </location>
</feature>
<feature type="strand" evidence="11">
    <location>
        <begin position="92"/>
        <end position="96"/>
    </location>
</feature>
<feature type="helix" evidence="11">
    <location>
        <begin position="101"/>
        <end position="108"/>
    </location>
</feature>
<feature type="turn" evidence="11">
    <location>
        <begin position="109"/>
        <end position="111"/>
    </location>
</feature>
<feature type="helix" evidence="11">
    <location>
        <begin position="114"/>
        <end position="116"/>
    </location>
</feature>
<feature type="strand" evidence="11">
    <location>
        <begin position="120"/>
        <end position="126"/>
    </location>
</feature>
<feature type="strand" evidence="11">
    <location>
        <begin position="128"/>
        <end position="136"/>
    </location>
</feature>
<feature type="turn" evidence="11">
    <location>
        <begin position="138"/>
        <end position="140"/>
    </location>
</feature>
<feature type="strand" evidence="11">
    <location>
        <begin position="143"/>
        <end position="148"/>
    </location>
</feature>
<feature type="turn" evidence="11">
    <location>
        <begin position="149"/>
        <end position="151"/>
    </location>
</feature>
<feature type="turn" evidence="11">
    <location>
        <begin position="162"/>
        <end position="164"/>
    </location>
</feature>
<feature type="strand" evidence="11">
    <location>
        <begin position="174"/>
        <end position="178"/>
    </location>
</feature>
<feature type="strand" evidence="11">
    <location>
        <begin position="181"/>
        <end position="187"/>
    </location>
</feature>
<feature type="strand" evidence="11">
    <location>
        <begin position="195"/>
        <end position="204"/>
    </location>
</feature>
<feature type="turn" evidence="11">
    <location>
        <begin position="214"/>
        <end position="216"/>
    </location>
</feature>
<feature type="strand" evidence="11">
    <location>
        <begin position="221"/>
        <end position="228"/>
    </location>
</feature>
<feature type="strand" evidence="11">
    <location>
        <begin position="231"/>
        <end position="239"/>
    </location>
</feature>
<feature type="turn" evidence="11">
    <location>
        <begin position="244"/>
        <end position="246"/>
    </location>
</feature>
<feature type="strand" evidence="11">
    <location>
        <begin position="250"/>
        <end position="258"/>
    </location>
</feature>
<feature type="strand" evidence="11">
    <location>
        <begin position="266"/>
        <end position="269"/>
    </location>
</feature>
<feature type="strand" evidence="11">
    <location>
        <begin position="277"/>
        <end position="282"/>
    </location>
</feature>
<feature type="strand" evidence="11">
    <location>
        <begin position="287"/>
        <end position="289"/>
    </location>
</feature>
<feature type="strand" evidence="11">
    <location>
        <begin position="295"/>
        <end position="299"/>
    </location>
</feature>
<feature type="strand" evidence="11">
    <location>
        <begin position="303"/>
        <end position="305"/>
    </location>
</feature>
<feature type="strand" evidence="11">
    <location>
        <begin position="308"/>
        <end position="316"/>
    </location>
</feature>
<feature type="strand" evidence="11">
    <location>
        <begin position="325"/>
        <end position="331"/>
    </location>
</feature>
<feature type="helix" evidence="11">
    <location>
        <begin position="332"/>
        <end position="338"/>
    </location>
</feature>
<feature type="strand" evidence="11">
    <location>
        <begin position="343"/>
        <end position="345"/>
    </location>
</feature>
<feature type="strand" evidence="11">
    <location>
        <begin position="347"/>
        <end position="351"/>
    </location>
</feature>
<feature type="helix" evidence="11">
    <location>
        <begin position="358"/>
        <end position="360"/>
    </location>
</feature>
<feature type="helix" evidence="11">
    <location>
        <begin position="381"/>
        <end position="383"/>
    </location>
</feature>
<feature type="helix" evidence="11">
    <location>
        <begin position="386"/>
        <end position="394"/>
    </location>
</feature>
<feature type="strand" evidence="11">
    <location>
        <begin position="397"/>
        <end position="400"/>
    </location>
</feature>
<feature type="helix" evidence="11">
    <location>
        <begin position="405"/>
        <end position="407"/>
    </location>
</feature>
<feature type="strand" evidence="11">
    <location>
        <begin position="410"/>
        <end position="413"/>
    </location>
</feature>
<feature type="strand" evidence="11">
    <location>
        <begin position="415"/>
        <end position="418"/>
    </location>
</feature>
<feature type="strand" evidence="11">
    <location>
        <begin position="420"/>
        <end position="426"/>
    </location>
</feature>
<feature type="turn" evidence="11">
    <location>
        <begin position="430"/>
        <end position="433"/>
    </location>
</feature>
<feature type="strand" evidence="11">
    <location>
        <begin position="437"/>
        <end position="442"/>
    </location>
</feature>
<feature type="strand" evidence="11">
    <location>
        <begin position="445"/>
        <end position="451"/>
    </location>
</feature>
<feature type="strand" evidence="11">
    <location>
        <begin position="467"/>
        <end position="470"/>
    </location>
</feature>
<feature type="helix" evidence="11">
    <location>
        <begin position="474"/>
        <end position="477"/>
    </location>
</feature>
<feature type="strand" evidence="11">
    <location>
        <begin position="489"/>
        <end position="493"/>
    </location>
</feature>
<feature type="turn" evidence="11">
    <location>
        <begin position="494"/>
        <end position="497"/>
    </location>
</feature>
<feature type="strand" evidence="11">
    <location>
        <begin position="498"/>
        <end position="502"/>
    </location>
</feature>
<feature type="strand" evidence="11">
    <location>
        <begin position="507"/>
        <end position="513"/>
    </location>
</feature>
<feature type="helix" evidence="11">
    <location>
        <begin position="515"/>
        <end position="518"/>
    </location>
</feature>
<feature type="helix" evidence="11">
    <location>
        <begin position="522"/>
        <end position="527"/>
    </location>
</feature>
<feature type="turn" evidence="11">
    <location>
        <begin position="537"/>
        <end position="540"/>
    </location>
</feature>
<feature type="strand" evidence="11">
    <location>
        <begin position="557"/>
        <end position="559"/>
    </location>
</feature>
<reference key="1">
    <citation type="journal article" date="2000" name="J. Biol. Chem.">
        <title>The orthologous human and murine semaphorin 6A-1 proteins (SEMA6A-1/Sema6A-1) bind to the enabled/vasodilator-stimulated phosphoprotein-like protein (EVL) via a novel carboxyl-terminal zyxin-like domain.</title>
        <authorList>
            <person name="Klostermann A."/>
            <person name="Lutz B."/>
            <person name="Gertler F."/>
            <person name="Behl C."/>
        </authorList>
    </citation>
    <scope>NUCLEOTIDE SEQUENCE [MRNA] (ISOFORM 1)</scope>
    <scope>INTERACTION WITH EVL</scope>
</reference>
<reference key="2">
    <citation type="journal article" date="2000" name="DNA Res.">
        <title>Prediction of the coding sequences of unidentified human genes. XVI. The complete sequences of 150 new cDNA clones from brain which code for large proteins in vitro.</title>
        <authorList>
            <person name="Nagase T."/>
            <person name="Kikuno R."/>
            <person name="Ishikawa K."/>
            <person name="Hirosawa M."/>
            <person name="Ohara O."/>
        </authorList>
    </citation>
    <scope>NUCLEOTIDE SEQUENCE [LARGE SCALE MRNA] (ISOFORM 2)</scope>
    <source>
        <tissue>Brain</tissue>
    </source>
</reference>
<reference key="3">
    <citation type="journal article" date="2004" name="Nature">
        <title>The DNA sequence and comparative analysis of human chromosome 5.</title>
        <authorList>
            <person name="Schmutz J."/>
            <person name="Martin J."/>
            <person name="Terry A."/>
            <person name="Couronne O."/>
            <person name="Grimwood J."/>
            <person name="Lowry S."/>
            <person name="Gordon L.A."/>
            <person name="Scott D."/>
            <person name="Xie G."/>
            <person name="Huang W."/>
            <person name="Hellsten U."/>
            <person name="Tran-Gyamfi M."/>
            <person name="She X."/>
            <person name="Prabhakar S."/>
            <person name="Aerts A."/>
            <person name="Altherr M."/>
            <person name="Bajorek E."/>
            <person name="Black S."/>
            <person name="Branscomb E."/>
            <person name="Caoile C."/>
            <person name="Challacombe J.F."/>
            <person name="Chan Y.M."/>
            <person name="Denys M."/>
            <person name="Detter J.C."/>
            <person name="Escobar J."/>
            <person name="Flowers D."/>
            <person name="Fotopulos D."/>
            <person name="Glavina T."/>
            <person name="Gomez M."/>
            <person name="Gonzales E."/>
            <person name="Goodstein D."/>
            <person name="Grigoriev I."/>
            <person name="Groza M."/>
            <person name="Hammon N."/>
            <person name="Hawkins T."/>
            <person name="Haydu L."/>
            <person name="Israni S."/>
            <person name="Jett J."/>
            <person name="Kadner K."/>
            <person name="Kimball H."/>
            <person name="Kobayashi A."/>
            <person name="Lopez F."/>
            <person name="Lou Y."/>
            <person name="Martinez D."/>
            <person name="Medina C."/>
            <person name="Morgan J."/>
            <person name="Nandkeshwar R."/>
            <person name="Noonan J.P."/>
            <person name="Pitluck S."/>
            <person name="Pollard M."/>
            <person name="Predki P."/>
            <person name="Priest J."/>
            <person name="Ramirez L."/>
            <person name="Retterer J."/>
            <person name="Rodriguez A."/>
            <person name="Rogers S."/>
            <person name="Salamov A."/>
            <person name="Salazar A."/>
            <person name="Thayer N."/>
            <person name="Tice H."/>
            <person name="Tsai M."/>
            <person name="Ustaszewska A."/>
            <person name="Vo N."/>
            <person name="Wheeler J."/>
            <person name="Wu K."/>
            <person name="Yang J."/>
            <person name="Dickson M."/>
            <person name="Cheng J.-F."/>
            <person name="Eichler E.E."/>
            <person name="Olsen A."/>
            <person name="Pennacchio L.A."/>
            <person name="Rokhsar D.S."/>
            <person name="Richardson P."/>
            <person name="Lucas S.M."/>
            <person name="Myers R.M."/>
            <person name="Rubin E.M."/>
        </authorList>
    </citation>
    <scope>NUCLEOTIDE SEQUENCE [LARGE SCALE GENOMIC DNA]</scope>
</reference>
<reference key="4">
    <citation type="journal article" date="2011" name="Sci. Signal.">
        <title>System-wide temporal characterization of the proteome and phosphoproteome of human embryonic stem cell differentiation.</title>
        <authorList>
            <person name="Rigbolt K.T."/>
            <person name="Prokhorova T.A."/>
            <person name="Akimov V."/>
            <person name="Henningsen J."/>
            <person name="Johansen P.T."/>
            <person name="Kratchmarova I."/>
            <person name="Kassem M."/>
            <person name="Mann M."/>
            <person name="Olsen J.V."/>
            <person name="Blagoev B."/>
        </authorList>
    </citation>
    <scope>PHOSPHORYLATION [LARGE SCALE ANALYSIS] AT SER-698 AND SER-952</scope>
    <scope>IDENTIFICATION BY MASS SPECTROMETRY [LARGE SCALE ANALYSIS]</scope>
</reference>
<reference key="5">
    <citation type="journal article" date="2020" name="Cell Host Microbe">
        <title>Genome-wide CRISPR screen identifies semaphorin 6A and 6B as receptors for Paeniclostridium sordellii toxin TcsL.</title>
        <authorList>
            <person name="Tian S."/>
            <person name="Liu Y."/>
            <person name="Wu H."/>
            <person name="Liu H."/>
            <person name="Zeng J."/>
            <person name="Choi M.Y."/>
            <person name="Chen H."/>
            <person name="Gerhard R."/>
            <person name="Dong M."/>
        </authorList>
    </citation>
    <scope>INTERACTION WITH P.SORDELLII PROTEIN TCSL (MICROBIAL INFECTION)</scope>
    <scope>FUNCTION (MICROBIAL INFECTION)</scope>
    <scope>SUBCELLULAR LOCATION</scope>
    <scope>GLYCOSYLATION</scope>
</reference>
<reference evidence="9" key="6">
    <citation type="journal article" date="2020" name="Cell">
        <title>Recognition of semaphorin proteins by P. sordellii lethal toxin reveals principles of receptor specificity in clostridial toxins.</title>
        <authorList>
            <person name="Lee H."/>
            <person name="Beilhartz G.L."/>
            <person name="Kucharska I."/>
            <person name="Raman S."/>
            <person name="Cui H."/>
            <person name="Lam M.H.Y."/>
            <person name="Liang H."/>
            <person name="Rubinstein J.L."/>
            <person name="Schramek D."/>
            <person name="Julien J.P."/>
            <person name="Melnyk R.A."/>
            <person name="Taipale M."/>
        </authorList>
    </citation>
    <scope>STRUCTURE BY ELECTRON MICROSCOPY (3.3 ANGSTROMS) OF 19-570 IN COMPLEX WITH P.SORDELLII PROTEIN TCSL</scope>
    <scope>INTERACTION WITH P.SORDELLII PROTEIN TCSL (MICROBIAL INFECTION)</scope>
    <scope>FUNCTION (MICROBIAL INFECTION)</scope>
    <scope>DISULFIDE BONDS</scope>
    <scope>GLYCOSYLATION AT ASN-33; ASN-65 AND ASN-434</scope>
</reference>
<dbReference type="EMBL" id="AF279656">
    <property type="protein sequence ID" value="AAG29378.1"/>
    <property type="molecule type" value="mRNA"/>
</dbReference>
<dbReference type="EMBL" id="AB037789">
    <property type="protein sequence ID" value="BAA92606.1"/>
    <property type="status" value="ALT_INIT"/>
    <property type="molecule type" value="mRNA"/>
</dbReference>
<dbReference type="EMBL" id="AC008524">
    <property type="status" value="NOT_ANNOTATED_CDS"/>
    <property type="molecule type" value="Genomic_DNA"/>
</dbReference>
<dbReference type="EMBL" id="AC010296">
    <property type="status" value="NOT_ANNOTATED_CDS"/>
    <property type="molecule type" value="Genomic_DNA"/>
</dbReference>
<dbReference type="EMBL" id="AC027304">
    <property type="status" value="NOT_ANNOTATED_CDS"/>
    <property type="molecule type" value="Genomic_DNA"/>
</dbReference>
<dbReference type="CCDS" id="CCDS47256.1">
    <molecule id="Q9H2E6-1"/>
</dbReference>
<dbReference type="CCDS" id="CCDS75288.1">
    <molecule id="Q9H2E6-2"/>
</dbReference>
<dbReference type="RefSeq" id="NP_001287709.1">
    <molecule id="Q9H2E6-2"/>
    <property type="nucleotide sequence ID" value="NM_001300780.2"/>
</dbReference>
<dbReference type="RefSeq" id="NP_065847.1">
    <molecule id="Q9H2E6-1"/>
    <property type="nucleotide sequence ID" value="NM_020796.5"/>
</dbReference>
<dbReference type="RefSeq" id="XP_047273407.1">
    <molecule id="Q9H2E6-1"/>
    <property type="nucleotide sequence ID" value="XM_047417451.1"/>
</dbReference>
<dbReference type="RefSeq" id="XP_054208988.1">
    <molecule id="Q9H2E6-1"/>
    <property type="nucleotide sequence ID" value="XM_054353013.1"/>
</dbReference>
<dbReference type="PDB" id="6WTS">
    <property type="method" value="EM"/>
    <property type="resolution" value="3.30 A"/>
    <property type="chains" value="A/B=19-570"/>
</dbReference>
<dbReference type="PDBsum" id="6WTS"/>
<dbReference type="EMDB" id="EMD-21898"/>
<dbReference type="EMDB" id="EMD-21899"/>
<dbReference type="SMR" id="Q9H2E6"/>
<dbReference type="BioGRID" id="121612">
    <property type="interactions" value="71"/>
</dbReference>
<dbReference type="ELM" id="Q9H2E6"/>
<dbReference type="FunCoup" id="Q9H2E6">
    <property type="interactions" value="834"/>
</dbReference>
<dbReference type="IntAct" id="Q9H2E6">
    <property type="interactions" value="34"/>
</dbReference>
<dbReference type="STRING" id="9606.ENSP00000257414"/>
<dbReference type="GlyConnect" id="1976">
    <property type="glycosylation" value="7 N-Linked glycans (4 sites)"/>
</dbReference>
<dbReference type="GlyCosmos" id="Q9H2E6">
    <property type="glycosylation" value="8 sites, 7 glycans"/>
</dbReference>
<dbReference type="GlyGen" id="Q9H2E6">
    <property type="glycosylation" value="9 sites, 8 N-linked glycans (5 sites)"/>
</dbReference>
<dbReference type="iPTMnet" id="Q9H2E6"/>
<dbReference type="PhosphoSitePlus" id="Q9H2E6"/>
<dbReference type="SwissPalm" id="Q9H2E6"/>
<dbReference type="BioMuta" id="SEMA6A"/>
<dbReference type="DMDM" id="296452903"/>
<dbReference type="jPOST" id="Q9H2E6"/>
<dbReference type="MassIVE" id="Q9H2E6"/>
<dbReference type="PaxDb" id="9606-ENSP00000257414"/>
<dbReference type="PeptideAtlas" id="Q9H2E6"/>
<dbReference type="ProteomicsDB" id="80536">
    <molecule id="Q9H2E6-1"/>
</dbReference>
<dbReference type="ProteomicsDB" id="80537">
    <molecule id="Q9H2E6-2"/>
</dbReference>
<dbReference type="Antibodypedia" id="25481">
    <property type="antibodies" value="317 antibodies from 30 providers"/>
</dbReference>
<dbReference type="DNASU" id="57556"/>
<dbReference type="Ensembl" id="ENST00000257414.12">
    <molecule id="Q9H2E6-2"/>
    <property type="protein sequence ID" value="ENSP00000257414.8"/>
    <property type="gene ID" value="ENSG00000092421.17"/>
</dbReference>
<dbReference type="Ensembl" id="ENST00000343348.11">
    <molecule id="Q9H2E6-1"/>
    <property type="protein sequence ID" value="ENSP00000345512.6"/>
    <property type="gene ID" value="ENSG00000092421.17"/>
</dbReference>
<dbReference type="Ensembl" id="ENST00000510263.5">
    <molecule id="Q9H2E6-1"/>
    <property type="protein sequence ID" value="ENSP00000424388.1"/>
    <property type="gene ID" value="ENSG00000092421.17"/>
</dbReference>
<dbReference type="GeneID" id="57556"/>
<dbReference type="KEGG" id="hsa:57556"/>
<dbReference type="MANE-Select" id="ENST00000343348.11">
    <property type="protein sequence ID" value="ENSP00000345512.6"/>
    <property type="RefSeq nucleotide sequence ID" value="NM_020796.5"/>
    <property type="RefSeq protein sequence ID" value="NP_065847.1"/>
</dbReference>
<dbReference type="UCSC" id="uc010jck.4">
    <molecule id="Q9H2E6-1"/>
    <property type="organism name" value="human"/>
</dbReference>
<dbReference type="AGR" id="HGNC:10738"/>
<dbReference type="CTD" id="57556"/>
<dbReference type="DisGeNET" id="57556"/>
<dbReference type="GeneCards" id="SEMA6A"/>
<dbReference type="HGNC" id="HGNC:10738">
    <property type="gene designation" value="SEMA6A"/>
</dbReference>
<dbReference type="HPA" id="ENSG00000092421">
    <property type="expression patterns" value="Tissue enhanced (adrenal gland, brain)"/>
</dbReference>
<dbReference type="MalaCards" id="SEMA6A"/>
<dbReference type="MIM" id="605885">
    <property type="type" value="gene"/>
</dbReference>
<dbReference type="neXtProt" id="NX_Q9H2E6"/>
<dbReference type="OpenTargets" id="ENSG00000092421"/>
<dbReference type="PharmGKB" id="PA35660"/>
<dbReference type="VEuPathDB" id="HostDB:ENSG00000092421"/>
<dbReference type="eggNOG" id="KOG3611">
    <property type="taxonomic scope" value="Eukaryota"/>
</dbReference>
<dbReference type="GeneTree" id="ENSGT00940000156565"/>
<dbReference type="HOGENOM" id="CLU_009051_2_0_1"/>
<dbReference type="InParanoid" id="Q9H2E6"/>
<dbReference type="OMA" id="HRRKDVT"/>
<dbReference type="OrthoDB" id="9988752at2759"/>
<dbReference type="PAN-GO" id="Q9H2E6">
    <property type="GO annotations" value="10 GO annotations based on evolutionary models"/>
</dbReference>
<dbReference type="PhylomeDB" id="Q9H2E6"/>
<dbReference type="TreeFam" id="TF316102"/>
<dbReference type="PathwayCommons" id="Q9H2E6"/>
<dbReference type="Reactome" id="R-HSA-416700">
    <property type="pathway name" value="Other semaphorin interactions"/>
</dbReference>
<dbReference type="SignaLink" id="Q9H2E6"/>
<dbReference type="BioGRID-ORCS" id="57556">
    <property type="hits" value="13 hits in 1149 CRISPR screens"/>
</dbReference>
<dbReference type="ChiTaRS" id="SEMA6A">
    <property type="organism name" value="human"/>
</dbReference>
<dbReference type="GeneWiki" id="SEMA6A"/>
<dbReference type="GenomeRNAi" id="57556"/>
<dbReference type="Pharos" id="Q9H2E6">
    <property type="development level" value="Tbio"/>
</dbReference>
<dbReference type="PRO" id="PR:Q9H2E6"/>
<dbReference type="Proteomes" id="UP000005640">
    <property type="component" value="Chromosome 5"/>
</dbReference>
<dbReference type="RNAct" id="Q9H2E6">
    <property type="molecule type" value="protein"/>
</dbReference>
<dbReference type="Bgee" id="ENSG00000092421">
    <property type="expression patterns" value="Expressed in inferior vagus X ganglion and 192 other cell types or tissues"/>
</dbReference>
<dbReference type="ExpressionAtlas" id="Q9H2E6">
    <property type="expression patterns" value="baseline and differential"/>
</dbReference>
<dbReference type="GO" id="GO:0030424">
    <property type="term" value="C:axon"/>
    <property type="evidence" value="ECO:0000303"/>
    <property type="project" value="UniProtKB"/>
</dbReference>
<dbReference type="GO" id="GO:0016020">
    <property type="term" value="C:membrane"/>
    <property type="evidence" value="ECO:0000303"/>
    <property type="project" value="UniProtKB"/>
</dbReference>
<dbReference type="GO" id="GO:0005886">
    <property type="term" value="C:plasma membrane"/>
    <property type="evidence" value="ECO:0000318"/>
    <property type="project" value="GO_Central"/>
</dbReference>
<dbReference type="GO" id="GO:0045499">
    <property type="term" value="F:chemorepellent activity"/>
    <property type="evidence" value="ECO:0000318"/>
    <property type="project" value="GO_Central"/>
</dbReference>
<dbReference type="GO" id="GO:0030215">
    <property type="term" value="F:semaphorin receptor binding"/>
    <property type="evidence" value="ECO:0000318"/>
    <property type="project" value="GO_Central"/>
</dbReference>
<dbReference type="GO" id="GO:0009887">
    <property type="term" value="P:animal organ morphogenesis"/>
    <property type="evidence" value="ECO:0000303"/>
    <property type="project" value="UniProtKB"/>
</dbReference>
<dbReference type="GO" id="GO:0006915">
    <property type="term" value="P:apoptotic process"/>
    <property type="evidence" value="ECO:0000303"/>
    <property type="project" value="UniProtKB"/>
</dbReference>
<dbReference type="GO" id="GO:0007411">
    <property type="term" value="P:axon guidance"/>
    <property type="evidence" value="ECO:0000318"/>
    <property type="project" value="GO_Central"/>
</dbReference>
<dbReference type="GO" id="GO:0007166">
    <property type="term" value="P:cell surface receptor signaling pathway"/>
    <property type="evidence" value="ECO:0000303"/>
    <property type="project" value="UniProtKB"/>
</dbReference>
<dbReference type="GO" id="GO:0035924">
    <property type="term" value="P:cellular response to vascular endothelial growth factor stimulus"/>
    <property type="evidence" value="ECO:0000314"/>
    <property type="project" value="BHF-UCL"/>
</dbReference>
<dbReference type="GO" id="GO:0007010">
    <property type="term" value="P:cytoskeleton organization"/>
    <property type="evidence" value="ECO:0000303"/>
    <property type="project" value="UniProtKB"/>
</dbReference>
<dbReference type="GO" id="GO:0016525">
    <property type="term" value="P:negative regulation of angiogenesis"/>
    <property type="evidence" value="ECO:0000316"/>
    <property type="project" value="BHF-UCL"/>
</dbReference>
<dbReference type="GO" id="GO:0106089">
    <property type="term" value="P:negative regulation of cell adhesion involved in sprouting angiogenesis"/>
    <property type="evidence" value="ECO:0000316"/>
    <property type="project" value="BHF-UCL"/>
</dbReference>
<dbReference type="GO" id="GO:0070373">
    <property type="term" value="P:negative regulation of ERK1 and ERK2 cascade"/>
    <property type="evidence" value="ECO:0000314"/>
    <property type="project" value="BHF-UCL"/>
</dbReference>
<dbReference type="GO" id="GO:1903671">
    <property type="term" value="P:negative regulation of sprouting angiogenesis"/>
    <property type="evidence" value="ECO:0000314"/>
    <property type="project" value="BHF-UCL"/>
</dbReference>
<dbReference type="GO" id="GO:1900747">
    <property type="term" value="P:negative regulation of vascular endothelial growth factor signaling pathway"/>
    <property type="evidence" value="ECO:0000314"/>
    <property type="project" value="BHF-UCL"/>
</dbReference>
<dbReference type="GO" id="GO:0007399">
    <property type="term" value="P:nervous system development"/>
    <property type="evidence" value="ECO:0000303"/>
    <property type="project" value="UniProtKB"/>
</dbReference>
<dbReference type="GO" id="GO:0001755">
    <property type="term" value="P:neural crest cell migration"/>
    <property type="evidence" value="ECO:0000318"/>
    <property type="project" value="GO_Central"/>
</dbReference>
<dbReference type="GO" id="GO:2001224">
    <property type="term" value="P:positive regulation of neuron migration"/>
    <property type="evidence" value="ECO:0000318"/>
    <property type="project" value="GO_Central"/>
</dbReference>
<dbReference type="GO" id="GO:0071526">
    <property type="term" value="P:semaphorin-plexin signaling pathway"/>
    <property type="evidence" value="ECO:0000318"/>
    <property type="project" value="GO_Central"/>
</dbReference>
<dbReference type="CDD" id="cd11266">
    <property type="entry name" value="Sema_6A"/>
    <property type="match status" value="1"/>
</dbReference>
<dbReference type="FunFam" id="2.130.10.10:FF:000028">
    <property type="entry name" value="semaphorin-6A isoform X1"/>
    <property type="match status" value="1"/>
</dbReference>
<dbReference type="FunFam" id="3.30.1680.10:FF:000007">
    <property type="entry name" value="semaphorin-6A isoform X1"/>
    <property type="match status" value="1"/>
</dbReference>
<dbReference type="Gene3D" id="3.30.1680.10">
    <property type="entry name" value="ligand-binding face of the semaphorins, domain 2"/>
    <property type="match status" value="1"/>
</dbReference>
<dbReference type="Gene3D" id="2.130.10.10">
    <property type="entry name" value="YVTN repeat-like/Quinoprotein amine dehydrogenase"/>
    <property type="match status" value="1"/>
</dbReference>
<dbReference type="InterPro" id="IPR002165">
    <property type="entry name" value="Plexin_repeat"/>
</dbReference>
<dbReference type="InterPro" id="IPR016201">
    <property type="entry name" value="PSI"/>
</dbReference>
<dbReference type="InterPro" id="IPR001627">
    <property type="entry name" value="Semap_dom"/>
</dbReference>
<dbReference type="InterPro" id="IPR036352">
    <property type="entry name" value="Semap_dom_sf"/>
</dbReference>
<dbReference type="InterPro" id="IPR027231">
    <property type="entry name" value="Semaphorin"/>
</dbReference>
<dbReference type="InterPro" id="IPR015943">
    <property type="entry name" value="WD40/YVTN_repeat-like_dom_sf"/>
</dbReference>
<dbReference type="PANTHER" id="PTHR11036">
    <property type="entry name" value="SEMAPHORIN"/>
    <property type="match status" value="1"/>
</dbReference>
<dbReference type="PANTHER" id="PTHR11036:SF12">
    <property type="entry name" value="SEMAPHORIN-6A"/>
    <property type="match status" value="1"/>
</dbReference>
<dbReference type="Pfam" id="PF01437">
    <property type="entry name" value="PSI"/>
    <property type="match status" value="1"/>
</dbReference>
<dbReference type="Pfam" id="PF01403">
    <property type="entry name" value="Sema"/>
    <property type="match status" value="1"/>
</dbReference>
<dbReference type="SMART" id="SM00423">
    <property type="entry name" value="PSI"/>
    <property type="match status" value="1"/>
</dbReference>
<dbReference type="SMART" id="SM00630">
    <property type="entry name" value="Sema"/>
    <property type="match status" value="1"/>
</dbReference>
<dbReference type="SUPFAM" id="SSF103575">
    <property type="entry name" value="Plexin repeat"/>
    <property type="match status" value="1"/>
</dbReference>
<dbReference type="SUPFAM" id="SSF101912">
    <property type="entry name" value="Sema domain"/>
    <property type="match status" value="1"/>
</dbReference>
<dbReference type="PROSITE" id="PS51004">
    <property type="entry name" value="SEMA"/>
    <property type="match status" value="1"/>
</dbReference>
<name>SEM6A_HUMAN</name>
<sequence length="1030" mass="114369">MRSEALLLYFTLLHFAGAGFPEDSEPISISHGNYTKQYPVFVGHKPGRNTTQRHRLDIQMIMIMNGTLYIAARDHIYTVDIDTSHTEEIYCSKKLTWKSRQADVDTCRMKGKHKDECHNFIKVLLKKNDDALFVCGTNAFNPSCRNYKMDTLEPFGDEFSGMARCPYDAKHANVALFADGKLYSATVTDFLAIDAVIYRSLGESPTLRTVKHDSKWLKEPYFVQAVDYGDYIYFFFREIAVEYNTMGKVVFPRVAQVCKNDMGGSQRVLEKQWTSFLKARLNCSVPGDSHFYFNILQAVTDVIRINGRDVVLATFSTPYNSIPGSAVCAYDMLDIASVFTGRFKEQKSPDSTWTPVPDERVPKPRPGCCAGSSSLERYATSNEFPDDTLNFIKTHPLMDEAVPSIFNRPWFLRTMVRYRLTKIAVDTAAGPYQNHTVVFLGSEKGIILKFLARIGNSGFLNDSLFLEEMSVYNSEKCSYDGVEDKRIMGMQLDRASSSLYVAFSTCVIKVPLGRCERHGKCKKTCIASRDPYCGWIKEGGACSHLSPNSRLTFEQDIERGNTDGLGDCHNSFVALNGHSSSLLPSTTTSDSTAQEGYESRGGMLDWKHLLDSPDSTDPLGAVSSHNHQDKKGVIRESYLKGHDQLVPVTLLAIAVILAFVMGAVFSGITVYCVCDHRRKDVAVVQRKEKELTHSRRGSMSSVTKLSGLFGDTQSKDPKPEAILTPLMHNGKLATPGNTAKMLIKADQHHLDLTALPTPESTPTLQQKRKPSRGSREWERNQNLINACTKDMPPMGSPVIPTDLPLRASPSHIPSVVVLPITQQGYQHEYVDQPKMSEVAQMALEDQAATLEYKTIKEHLSSKSPNHGVNLVENLDSLPPKVPQREASLGPPGASLSQTGLSKRLEMHHSSSYGVDYKRSYPTNSLTRSHQATTLKRNNTNSSNSSHLSRNQSFGRGDNPPPAPQRVDSIQVHSSQPSGQAVTVSRQPSLNAYNSLTRSGLKRTPSLKPDVPPKPSFAPLSTSMKPNDACT</sequence>
<accession>Q9H2E6</accession>
<accession>Q9P2H9</accession>
<comment type="function">
    <text evidence="1">Cell surface receptor for PLXNA2 that plays an important role in cell-cell signaling. Required for normal granule cell migration in the developing cerebellum. Promotes reorganization of the actin cytoskeleton and plays an important role in axon guidance in the developing central nervous system. Can act as repulsive axon guidance cue. Has repulsive action towards migrating granular neurons. May play a role in channeling sympathetic axons into the sympathetic chains and controlling the temporal sequence of sympathetic target innervation.</text>
</comment>
<comment type="function">
    <text evidence="6 7">(Microbial infection) Acts as a receptor for P.sordellii toxin TcsL in the in the vascular endothelium.</text>
</comment>
<comment type="subunit">
    <text evidence="1 5">Active as a homodimer or oligomer (By similarity). The SEMA6A homodimer interacts with a PLXNA2 homodimer, giving rise to a heterotetramer (By similarity). Interacts with EVL (PubMed:10993894).</text>
</comment>
<comment type="subunit">
    <text evidence="6 7">(Microbial infection) Interacts with P.sordellii toxin TcsL; semaphorins SEMA6A and SEMA6B constitute the major host receptors for TcsL in the vascular endothelium.</text>
</comment>
<comment type="subcellular location">
    <subcellularLocation>
        <location evidence="6">Cell membrane</location>
        <topology evidence="2">Single-pass type I membrane protein</topology>
    </subcellularLocation>
</comment>
<comment type="alternative products">
    <event type="alternative splicing"/>
    <isoform>
        <id>Q9H2E6-1</id>
        <name>1</name>
        <sequence type="displayed"/>
    </isoform>
    <isoform>
        <id>Q9H2E6-2</id>
        <name>2</name>
        <sequence type="described" ref="VSP_007113"/>
    </isoform>
</comment>
<comment type="similarity">
    <text evidence="8">Belongs to the semaphorin family.</text>
</comment>
<comment type="sequence caution" evidence="8">
    <conflict type="erroneous initiation">
        <sequence resource="EMBL-CDS" id="BAA92606"/>
    </conflict>
    <text>Extended N-terminus.</text>
</comment>
<gene>
    <name type="primary">SEMA6A</name>
    <name type="synonym">KIAA1368</name>
    <name type="synonym">SEMAQ</name>
</gene>
<organism>
    <name type="scientific">Homo sapiens</name>
    <name type="common">Human</name>
    <dbReference type="NCBI Taxonomy" id="9606"/>
    <lineage>
        <taxon>Eukaryota</taxon>
        <taxon>Metazoa</taxon>
        <taxon>Chordata</taxon>
        <taxon>Craniata</taxon>
        <taxon>Vertebrata</taxon>
        <taxon>Euteleostomi</taxon>
        <taxon>Mammalia</taxon>
        <taxon>Eutheria</taxon>
        <taxon>Euarchontoglires</taxon>
        <taxon>Primates</taxon>
        <taxon>Haplorrhini</taxon>
        <taxon>Catarrhini</taxon>
        <taxon>Hominidae</taxon>
        <taxon>Homo</taxon>
    </lineage>
</organism>
<proteinExistence type="evidence at protein level"/>